<evidence type="ECO:0000255" key="1">
    <source>
        <dbReference type="HAMAP-Rule" id="MF_00607"/>
    </source>
</evidence>
<evidence type="ECO:0000305" key="2"/>
<protein>
    <recommendedName>
        <fullName evidence="1">Ribosomal RNA small subunit methyltransferase A</fullName>
        <ecNumber evidence="1">2.1.1.182</ecNumber>
    </recommendedName>
    <alternativeName>
        <fullName evidence="1">16S rRNA (adenine(1518)-N(6)/adenine(1519)-N(6))-dimethyltransferase</fullName>
    </alternativeName>
    <alternativeName>
        <fullName evidence="1">16S rRNA dimethyladenosine transferase</fullName>
    </alternativeName>
    <alternativeName>
        <fullName evidence="1">16S rRNA dimethylase</fullName>
    </alternativeName>
    <alternativeName>
        <fullName evidence="1">S-adenosylmethionine-6-N', N'-adenosyl(rRNA) dimethyltransferase</fullName>
    </alternativeName>
</protein>
<gene>
    <name evidence="1" type="primary">rsmA</name>
    <name evidence="1" type="synonym">ksgA</name>
    <name type="ordered locus">Jann_1809</name>
</gene>
<dbReference type="EC" id="2.1.1.182" evidence="1"/>
<dbReference type="EMBL" id="CP000264">
    <property type="protein sequence ID" value="ABD54726.1"/>
    <property type="status" value="ALT_INIT"/>
    <property type="molecule type" value="Genomic_DNA"/>
</dbReference>
<dbReference type="RefSeq" id="WP_044007427.1">
    <property type="nucleotide sequence ID" value="NC_007802.1"/>
</dbReference>
<dbReference type="SMR" id="Q28RD6"/>
<dbReference type="STRING" id="290400.Jann_1809"/>
<dbReference type="KEGG" id="jan:Jann_1809"/>
<dbReference type="eggNOG" id="COG0030">
    <property type="taxonomic scope" value="Bacteria"/>
</dbReference>
<dbReference type="HOGENOM" id="CLU_041220_0_1_5"/>
<dbReference type="OrthoDB" id="9814755at2"/>
<dbReference type="Proteomes" id="UP000008326">
    <property type="component" value="Chromosome"/>
</dbReference>
<dbReference type="GO" id="GO:0005829">
    <property type="term" value="C:cytosol"/>
    <property type="evidence" value="ECO:0007669"/>
    <property type="project" value="TreeGrafter"/>
</dbReference>
<dbReference type="GO" id="GO:0052908">
    <property type="term" value="F:16S rRNA (adenine(1518)-N(6)/adenine(1519)-N(6))-dimethyltransferase activity"/>
    <property type="evidence" value="ECO:0007669"/>
    <property type="project" value="UniProtKB-EC"/>
</dbReference>
<dbReference type="GO" id="GO:0003723">
    <property type="term" value="F:RNA binding"/>
    <property type="evidence" value="ECO:0007669"/>
    <property type="project" value="UniProtKB-KW"/>
</dbReference>
<dbReference type="CDD" id="cd02440">
    <property type="entry name" value="AdoMet_MTases"/>
    <property type="match status" value="1"/>
</dbReference>
<dbReference type="FunFam" id="1.10.8.100:FF:000001">
    <property type="entry name" value="Ribosomal RNA small subunit methyltransferase A"/>
    <property type="match status" value="1"/>
</dbReference>
<dbReference type="Gene3D" id="1.10.8.100">
    <property type="entry name" value="Ribosomal RNA adenine dimethylase-like, domain 2"/>
    <property type="match status" value="1"/>
</dbReference>
<dbReference type="Gene3D" id="3.40.50.150">
    <property type="entry name" value="Vaccinia Virus protein VP39"/>
    <property type="match status" value="1"/>
</dbReference>
<dbReference type="HAMAP" id="MF_00607">
    <property type="entry name" value="16SrRNA_methyltr_A"/>
    <property type="match status" value="1"/>
</dbReference>
<dbReference type="InterPro" id="IPR001737">
    <property type="entry name" value="KsgA/Erm"/>
</dbReference>
<dbReference type="InterPro" id="IPR023165">
    <property type="entry name" value="rRNA_Ade_diMease-like_C"/>
</dbReference>
<dbReference type="InterPro" id="IPR020596">
    <property type="entry name" value="rRNA_Ade_Mease_Trfase_CS"/>
</dbReference>
<dbReference type="InterPro" id="IPR020598">
    <property type="entry name" value="rRNA_Ade_methylase_Trfase_N"/>
</dbReference>
<dbReference type="InterPro" id="IPR011530">
    <property type="entry name" value="rRNA_adenine_dimethylase"/>
</dbReference>
<dbReference type="InterPro" id="IPR029063">
    <property type="entry name" value="SAM-dependent_MTases_sf"/>
</dbReference>
<dbReference type="NCBIfam" id="TIGR00755">
    <property type="entry name" value="ksgA"/>
    <property type="match status" value="1"/>
</dbReference>
<dbReference type="PANTHER" id="PTHR11727">
    <property type="entry name" value="DIMETHYLADENOSINE TRANSFERASE"/>
    <property type="match status" value="1"/>
</dbReference>
<dbReference type="PANTHER" id="PTHR11727:SF7">
    <property type="entry name" value="DIMETHYLADENOSINE TRANSFERASE-RELATED"/>
    <property type="match status" value="1"/>
</dbReference>
<dbReference type="Pfam" id="PF00398">
    <property type="entry name" value="RrnaAD"/>
    <property type="match status" value="1"/>
</dbReference>
<dbReference type="SMART" id="SM00650">
    <property type="entry name" value="rADc"/>
    <property type="match status" value="1"/>
</dbReference>
<dbReference type="SUPFAM" id="SSF53335">
    <property type="entry name" value="S-adenosyl-L-methionine-dependent methyltransferases"/>
    <property type="match status" value="1"/>
</dbReference>
<dbReference type="PROSITE" id="PS01131">
    <property type="entry name" value="RRNA_A_DIMETH"/>
    <property type="match status" value="1"/>
</dbReference>
<dbReference type="PROSITE" id="PS51689">
    <property type="entry name" value="SAM_RNA_A_N6_MT"/>
    <property type="match status" value="1"/>
</dbReference>
<reference key="1">
    <citation type="submission" date="2006-02" db="EMBL/GenBank/DDBJ databases">
        <title>Complete sequence of chromosome of Jannaschia sp. CCS1.</title>
        <authorList>
            <consortium name="US DOE Joint Genome Institute"/>
            <person name="Copeland A."/>
            <person name="Lucas S."/>
            <person name="Lapidus A."/>
            <person name="Barry K."/>
            <person name="Detter J.C."/>
            <person name="Glavina del Rio T."/>
            <person name="Hammon N."/>
            <person name="Israni S."/>
            <person name="Pitluck S."/>
            <person name="Brettin T."/>
            <person name="Bruce D."/>
            <person name="Han C."/>
            <person name="Tapia R."/>
            <person name="Gilna P."/>
            <person name="Chertkov O."/>
            <person name="Saunders E."/>
            <person name="Schmutz J."/>
            <person name="Larimer F."/>
            <person name="Land M."/>
            <person name="Kyrpides N."/>
            <person name="Lykidis A."/>
            <person name="Moran M.A."/>
            <person name="Belas R."/>
            <person name="Ye W."/>
            <person name="Buchan A."/>
            <person name="Gonzalez J.M."/>
            <person name="Schell M.A."/>
            <person name="Richardson P."/>
        </authorList>
    </citation>
    <scope>NUCLEOTIDE SEQUENCE [LARGE SCALE GENOMIC DNA]</scope>
    <source>
        <strain>CCS1</strain>
    </source>
</reference>
<comment type="function">
    <text evidence="1">Specifically dimethylates two adjacent adenosines (A1518 and A1519) in the loop of a conserved hairpin near the 3'-end of 16S rRNA in the 30S particle. May play a critical role in biogenesis of 30S subunits.</text>
</comment>
<comment type="catalytic activity">
    <reaction evidence="1">
        <text>adenosine(1518)/adenosine(1519) in 16S rRNA + 4 S-adenosyl-L-methionine = N(6)-dimethyladenosine(1518)/N(6)-dimethyladenosine(1519) in 16S rRNA + 4 S-adenosyl-L-homocysteine + 4 H(+)</text>
        <dbReference type="Rhea" id="RHEA:19609"/>
        <dbReference type="Rhea" id="RHEA-COMP:10232"/>
        <dbReference type="Rhea" id="RHEA-COMP:10233"/>
        <dbReference type="ChEBI" id="CHEBI:15378"/>
        <dbReference type="ChEBI" id="CHEBI:57856"/>
        <dbReference type="ChEBI" id="CHEBI:59789"/>
        <dbReference type="ChEBI" id="CHEBI:74411"/>
        <dbReference type="ChEBI" id="CHEBI:74493"/>
        <dbReference type="EC" id="2.1.1.182"/>
    </reaction>
</comment>
<comment type="subcellular location">
    <subcellularLocation>
        <location evidence="1">Cytoplasm</location>
    </subcellularLocation>
</comment>
<comment type="similarity">
    <text evidence="1">Belongs to the class I-like SAM-binding methyltransferase superfamily. rRNA adenine N(6)-methyltransferase family. RsmA subfamily.</text>
</comment>
<comment type="sequence caution" evidence="2">
    <conflict type="erroneous initiation">
        <sequence resource="EMBL-CDS" id="ABD54726"/>
    </conflict>
</comment>
<organism>
    <name type="scientific">Jannaschia sp. (strain CCS1)</name>
    <dbReference type="NCBI Taxonomy" id="290400"/>
    <lineage>
        <taxon>Bacteria</taxon>
        <taxon>Pseudomonadati</taxon>
        <taxon>Pseudomonadota</taxon>
        <taxon>Alphaproteobacteria</taxon>
        <taxon>Rhodobacterales</taxon>
        <taxon>Roseobacteraceae</taxon>
        <taxon>Jannaschia</taxon>
    </lineage>
</organism>
<proteinExistence type="inferred from homology"/>
<accession>Q28RD6</accession>
<keyword id="KW-0963">Cytoplasm</keyword>
<keyword id="KW-0489">Methyltransferase</keyword>
<keyword id="KW-1185">Reference proteome</keyword>
<keyword id="KW-0694">RNA-binding</keyword>
<keyword id="KW-0698">rRNA processing</keyword>
<keyword id="KW-0949">S-adenosyl-L-methionine</keyword>
<keyword id="KW-0808">Transferase</keyword>
<feature type="chain" id="PRO_0000257296" description="Ribosomal RNA small subunit methyltransferase A">
    <location>
        <begin position="1"/>
        <end position="289"/>
    </location>
</feature>
<feature type="binding site" evidence="1">
    <location>
        <position position="28"/>
    </location>
    <ligand>
        <name>S-adenosyl-L-methionine</name>
        <dbReference type="ChEBI" id="CHEBI:59789"/>
    </ligand>
</feature>
<feature type="binding site" evidence="1">
    <location>
        <position position="30"/>
    </location>
    <ligand>
        <name>S-adenosyl-L-methionine</name>
        <dbReference type="ChEBI" id="CHEBI:59789"/>
    </ligand>
</feature>
<feature type="binding site" evidence="1">
    <location>
        <position position="55"/>
    </location>
    <ligand>
        <name>S-adenosyl-L-methionine</name>
        <dbReference type="ChEBI" id="CHEBI:59789"/>
    </ligand>
</feature>
<feature type="binding site" evidence="1">
    <location>
        <position position="77"/>
    </location>
    <ligand>
        <name>S-adenosyl-L-methionine</name>
        <dbReference type="ChEBI" id="CHEBI:59789"/>
    </ligand>
</feature>
<feature type="binding site" evidence="1">
    <location>
        <position position="103"/>
    </location>
    <ligand>
        <name>S-adenosyl-L-methionine</name>
        <dbReference type="ChEBI" id="CHEBI:59789"/>
    </ligand>
</feature>
<feature type="binding site" evidence="1">
    <location>
        <position position="122"/>
    </location>
    <ligand>
        <name>S-adenosyl-L-methionine</name>
        <dbReference type="ChEBI" id="CHEBI:59789"/>
    </ligand>
</feature>
<sequence length="289" mass="31219">MVAIDGLPPLRDVIAAHGLSARKALGQNFLLDLNLTAKIARLAGDLTSVDVLEVGPGPGGLTRGLLAEGARRVVAVEKDPRCLPVLAEIEAIYPGRLKVLNADALELDWAADLQAPRKIVANLPYNVGTELLVRWLTPASWPPPWESLTLMFQREVAERIVAQPGSKTYGRLAILSQWRADPRIVMGLPPEAFTPPPKVHSAVVHFTALPAPRFPADARVLTRVVAAAFGQRRKMLRAALKGLAPDIEDRLVAAGLKPTDRAEQVPLEGFCALARVMEDVITPSHGREA</sequence>
<name>RSMA_JANSC</name>